<feature type="chain" id="PRO_0000155925" description="Ribonuclease Z">
    <location>
        <begin position="1"/>
        <end position="279"/>
    </location>
</feature>
<feature type="active site" description="Proton acceptor" evidence="1">
    <location>
        <position position="68"/>
    </location>
</feature>
<feature type="binding site" evidence="1">
    <location>
        <position position="64"/>
    </location>
    <ligand>
        <name>Zn(2+)</name>
        <dbReference type="ChEBI" id="CHEBI:29105"/>
        <label>1</label>
        <note>catalytic</note>
    </ligand>
</feature>
<feature type="binding site" evidence="1">
    <location>
        <position position="66"/>
    </location>
    <ligand>
        <name>Zn(2+)</name>
        <dbReference type="ChEBI" id="CHEBI:29105"/>
        <label>1</label>
        <note>catalytic</note>
    </ligand>
</feature>
<feature type="binding site" evidence="1">
    <location>
        <position position="68"/>
    </location>
    <ligand>
        <name>Zn(2+)</name>
        <dbReference type="ChEBI" id="CHEBI:29105"/>
        <label>2</label>
        <note>catalytic</note>
    </ligand>
</feature>
<feature type="binding site" evidence="1">
    <location>
        <position position="69"/>
    </location>
    <ligand>
        <name>Zn(2+)</name>
        <dbReference type="ChEBI" id="CHEBI:29105"/>
        <label>2</label>
        <note>catalytic</note>
    </ligand>
</feature>
<feature type="binding site" evidence="1">
    <location>
        <position position="134"/>
    </location>
    <ligand>
        <name>Zn(2+)</name>
        <dbReference type="ChEBI" id="CHEBI:29105"/>
        <label>1</label>
        <note>catalytic</note>
    </ligand>
</feature>
<feature type="binding site" evidence="1">
    <location>
        <position position="191"/>
    </location>
    <ligand>
        <name>Zn(2+)</name>
        <dbReference type="ChEBI" id="CHEBI:29105"/>
        <label>1</label>
        <note>catalytic</note>
    </ligand>
</feature>
<feature type="binding site" evidence="1">
    <location>
        <position position="191"/>
    </location>
    <ligand>
        <name>Zn(2+)</name>
        <dbReference type="ChEBI" id="CHEBI:29105"/>
        <label>2</label>
        <note>catalytic</note>
    </ligand>
</feature>
<feature type="binding site" evidence="1">
    <location>
        <position position="245"/>
    </location>
    <ligand>
        <name>Zn(2+)</name>
        <dbReference type="ChEBI" id="CHEBI:29105"/>
        <label>2</label>
        <note>catalytic</note>
    </ligand>
</feature>
<name>RNZ_METKA</name>
<proteinExistence type="inferred from homology"/>
<keyword id="KW-0255">Endonuclease</keyword>
<keyword id="KW-0378">Hydrolase</keyword>
<keyword id="KW-0479">Metal-binding</keyword>
<keyword id="KW-0540">Nuclease</keyword>
<keyword id="KW-1185">Reference proteome</keyword>
<keyword id="KW-0819">tRNA processing</keyword>
<keyword id="KW-0862">Zinc</keyword>
<gene>
    <name evidence="1" type="primary">rnz</name>
    <name type="ordered locus">MK1033</name>
</gene>
<sequence length="279" mass="31073">MDRELVMRFLGTGGAVPSKDRSHPGLLVEFSGTKLLIDCGEGTQRRAMEQGVTIHDVDAVLLTHHHVDHVAGLLPLATTVDLLHGRRLKVYGPTAGSESALDISDLEVIEYREVNPGDEVEIGDLRVLVYESEHGVPTVDYRIETPKIPGKADPKYIRRVPPSKRREVLLRGERPYSLTKPGKISVYVKGDGRPADPENVRGCQVLVHEACFEDHEEAVRYLHSTHLEAAEVAREAGVDLLVLTHLSTKVDPERMREEAREVFPVVVVARDGLMVRVRR</sequence>
<reference key="1">
    <citation type="journal article" date="2002" name="Proc. Natl. Acad. Sci. U.S.A.">
        <title>The complete genome of hyperthermophile Methanopyrus kandleri AV19 and monophyly of archaeal methanogens.</title>
        <authorList>
            <person name="Slesarev A.I."/>
            <person name="Mezhevaya K.V."/>
            <person name="Makarova K.S."/>
            <person name="Polushin N.N."/>
            <person name="Shcherbinina O.V."/>
            <person name="Shakhova V.V."/>
            <person name="Belova G.I."/>
            <person name="Aravind L."/>
            <person name="Natale D.A."/>
            <person name="Rogozin I.B."/>
            <person name="Tatusov R.L."/>
            <person name="Wolf Y.I."/>
            <person name="Stetter K.O."/>
            <person name="Malykh A.G."/>
            <person name="Koonin E.V."/>
            <person name="Kozyavkin S.A."/>
        </authorList>
    </citation>
    <scope>NUCLEOTIDE SEQUENCE [LARGE SCALE GENOMIC DNA]</scope>
    <source>
        <strain>AV19 / DSM 6324 / JCM 9639 / NBRC 100938</strain>
    </source>
</reference>
<accession>Q8TWK0</accession>
<evidence type="ECO:0000255" key="1">
    <source>
        <dbReference type="HAMAP-Rule" id="MF_01818"/>
    </source>
</evidence>
<comment type="function">
    <text evidence="1">Zinc phosphodiesterase, which displays some tRNA 3'-processing endonuclease activity. Probably involved in tRNA maturation, by removing a 3'-trailer from precursor tRNA.</text>
</comment>
<comment type="catalytic activity">
    <reaction evidence="1">
        <text>Endonucleolytic cleavage of RNA, removing extra 3' nucleotides from tRNA precursor, generating 3' termini of tRNAs. A 3'-hydroxy group is left at the tRNA terminus and a 5'-phosphoryl group is left at the trailer molecule.</text>
        <dbReference type="EC" id="3.1.26.11"/>
    </reaction>
</comment>
<comment type="cofactor">
    <cofactor evidence="1">
        <name>Zn(2+)</name>
        <dbReference type="ChEBI" id="CHEBI:29105"/>
    </cofactor>
    <text evidence="1">Binds 2 Zn(2+) ions.</text>
</comment>
<comment type="subunit">
    <text evidence="1">Homodimer.</text>
</comment>
<comment type="similarity">
    <text evidence="1">Belongs to the RNase Z family.</text>
</comment>
<protein>
    <recommendedName>
        <fullName evidence="1">Ribonuclease Z</fullName>
        <shortName evidence="1">RNase Z</shortName>
        <ecNumber evidence="1">3.1.26.11</ecNumber>
    </recommendedName>
    <alternativeName>
        <fullName evidence="1">tRNA 3 endonuclease</fullName>
    </alternativeName>
    <alternativeName>
        <fullName evidence="1">tRNase Z</fullName>
    </alternativeName>
</protein>
<organism>
    <name type="scientific">Methanopyrus kandleri (strain AV19 / DSM 6324 / JCM 9639 / NBRC 100938)</name>
    <dbReference type="NCBI Taxonomy" id="190192"/>
    <lineage>
        <taxon>Archaea</taxon>
        <taxon>Methanobacteriati</taxon>
        <taxon>Methanobacteriota</taxon>
        <taxon>Methanomada group</taxon>
        <taxon>Methanopyri</taxon>
        <taxon>Methanopyrales</taxon>
        <taxon>Methanopyraceae</taxon>
        <taxon>Methanopyrus</taxon>
    </lineage>
</organism>
<dbReference type="EC" id="3.1.26.11" evidence="1"/>
<dbReference type="EMBL" id="AE009439">
    <property type="protein sequence ID" value="AAM02246.1"/>
    <property type="molecule type" value="Genomic_DNA"/>
</dbReference>
<dbReference type="RefSeq" id="WP_011019401.1">
    <property type="nucleotide sequence ID" value="NC_003551.1"/>
</dbReference>
<dbReference type="SMR" id="Q8TWK0"/>
<dbReference type="FunCoup" id="Q8TWK0">
    <property type="interactions" value="117"/>
</dbReference>
<dbReference type="STRING" id="190192.MK1033"/>
<dbReference type="PaxDb" id="190192-MK1033"/>
<dbReference type="EnsemblBacteria" id="AAM02246">
    <property type="protein sequence ID" value="AAM02246"/>
    <property type="gene ID" value="MK1033"/>
</dbReference>
<dbReference type="GeneID" id="1477134"/>
<dbReference type="KEGG" id="mka:MK1033"/>
<dbReference type="PATRIC" id="fig|190192.8.peg.1085"/>
<dbReference type="HOGENOM" id="CLU_031317_2_1_2"/>
<dbReference type="InParanoid" id="Q8TWK0"/>
<dbReference type="OrthoDB" id="85118at2157"/>
<dbReference type="Proteomes" id="UP000001826">
    <property type="component" value="Chromosome"/>
</dbReference>
<dbReference type="GO" id="GO:0042781">
    <property type="term" value="F:3'-tRNA processing endoribonuclease activity"/>
    <property type="evidence" value="ECO:0007669"/>
    <property type="project" value="UniProtKB-UniRule"/>
</dbReference>
<dbReference type="GO" id="GO:0008270">
    <property type="term" value="F:zinc ion binding"/>
    <property type="evidence" value="ECO:0007669"/>
    <property type="project" value="UniProtKB-UniRule"/>
</dbReference>
<dbReference type="Gene3D" id="3.60.15.10">
    <property type="entry name" value="Ribonuclease Z/Hydroxyacylglutathione hydrolase-like"/>
    <property type="match status" value="1"/>
</dbReference>
<dbReference type="HAMAP" id="MF_01818">
    <property type="entry name" value="RNase_Z_BN"/>
    <property type="match status" value="1"/>
</dbReference>
<dbReference type="InterPro" id="IPR001279">
    <property type="entry name" value="Metallo-B-lactamas"/>
</dbReference>
<dbReference type="InterPro" id="IPR036866">
    <property type="entry name" value="RibonucZ/Hydroxyglut_hydro"/>
</dbReference>
<dbReference type="InterPro" id="IPR013471">
    <property type="entry name" value="RNase_Z/BN"/>
</dbReference>
<dbReference type="PANTHER" id="PTHR46018">
    <property type="entry name" value="ZINC PHOSPHODIESTERASE ELAC PROTEIN 1"/>
    <property type="match status" value="1"/>
</dbReference>
<dbReference type="PANTHER" id="PTHR46018:SF2">
    <property type="entry name" value="ZINC PHOSPHODIESTERASE ELAC PROTEIN 1"/>
    <property type="match status" value="1"/>
</dbReference>
<dbReference type="Pfam" id="PF12706">
    <property type="entry name" value="Lactamase_B_2"/>
    <property type="match status" value="1"/>
</dbReference>
<dbReference type="SMART" id="SM00849">
    <property type="entry name" value="Lactamase_B"/>
    <property type="match status" value="1"/>
</dbReference>
<dbReference type="SUPFAM" id="SSF56281">
    <property type="entry name" value="Metallo-hydrolase/oxidoreductase"/>
    <property type="match status" value="1"/>
</dbReference>